<evidence type="ECO:0000255" key="1">
    <source>
        <dbReference type="HAMAP-Rule" id="MF_01953"/>
    </source>
</evidence>
<protein>
    <recommendedName>
        <fullName evidence="1">Urease subunit alpha</fullName>
        <ecNumber evidence="1">3.5.1.5</ecNumber>
    </recommendedName>
    <alternativeName>
        <fullName evidence="1">Urea amidohydrolase subunit alpha</fullName>
    </alternativeName>
</protein>
<dbReference type="EC" id="3.5.1.5" evidence="1"/>
<dbReference type="EMBL" id="CP000305">
    <property type="protein sequence ID" value="ABG17481.1"/>
    <property type="molecule type" value="Genomic_DNA"/>
</dbReference>
<dbReference type="EMBL" id="ACNQ01000008">
    <property type="protein sequence ID" value="EEO77584.1"/>
    <property type="molecule type" value="Genomic_DNA"/>
</dbReference>
<dbReference type="RefSeq" id="WP_002212229.1">
    <property type="nucleotide sequence ID" value="NZ_ACNQ01000008.1"/>
</dbReference>
<dbReference type="SMR" id="Q1CKJ9"/>
<dbReference type="KEGG" id="ypn:YPN_1151"/>
<dbReference type="HOGENOM" id="CLU_000980_0_0_6"/>
<dbReference type="UniPathway" id="UPA00258">
    <property type="reaction ID" value="UER00370"/>
</dbReference>
<dbReference type="Proteomes" id="UP000008936">
    <property type="component" value="Chromosome"/>
</dbReference>
<dbReference type="GO" id="GO:0005737">
    <property type="term" value="C:cytoplasm"/>
    <property type="evidence" value="ECO:0007669"/>
    <property type="project" value="UniProtKB-SubCell"/>
</dbReference>
<dbReference type="GO" id="GO:0016151">
    <property type="term" value="F:nickel cation binding"/>
    <property type="evidence" value="ECO:0007669"/>
    <property type="project" value="UniProtKB-UniRule"/>
</dbReference>
<dbReference type="GO" id="GO:0009039">
    <property type="term" value="F:urease activity"/>
    <property type="evidence" value="ECO:0007669"/>
    <property type="project" value="UniProtKB-UniRule"/>
</dbReference>
<dbReference type="GO" id="GO:0043419">
    <property type="term" value="P:urea catabolic process"/>
    <property type="evidence" value="ECO:0007669"/>
    <property type="project" value="UniProtKB-UniRule"/>
</dbReference>
<dbReference type="CDD" id="cd00375">
    <property type="entry name" value="Urease_alpha"/>
    <property type="match status" value="1"/>
</dbReference>
<dbReference type="Gene3D" id="3.20.20.140">
    <property type="entry name" value="Metal-dependent hydrolases"/>
    <property type="match status" value="1"/>
</dbReference>
<dbReference type="Gene3D" id="2.30.40.10">
    <property type="entry name" value="Urease, subunit C, domain 1"/>
    <property type="match status" value="1"/>
</dbReference>
<dbReference type="HAMAP" id="MF_01953">
    <property type="entry name" value="Urease_alpha"/>
    <property type="match status" value="1"/>
</dbReference>
<dbReference type="InterPro" id="IPR006680">
    <property type="entry name" value="Amidohydro-rel"/>
</dbReference>
<dbReference type="InterPro" id="IPR011059">
    <property type="entry name" value="Metal-dep_hydrolase_composite"/>
</dbReference>
<dbReference type="InterPro" id="IPR032466">
    <property type="entry name" value="Metal_Hydrolase"/>
</dbReference>
<dbReference type="InterPro" id="IPR011612">
    <property type="entry name" value="Urease_alpha_N_dom"/>
</dbReference>
<dbReference type="InterPro" id="IPR050112">
    <property type="entry name" value="Urease_alpha_subunit"/>
</dbReference>
<dbReference type="InterPro" id="IPR017950">
    <property type="entry name" value="Urease_AS"/>
</dbReference>
<dbReference type="InterPro" id="IPR005848">
    <property type="entry name" value="Urease_asu"/>
</dbReference>
<dbReference type="InterPro" id="IPR017951">
    <property type="entry name" value="Urease_asu_c"/>
</dbReference>
<dbReference type="InterPro" id="IPR029754">
    <property type="entry name" value="Urease_Ni-bd"/>
</dbReference>
<dbReference type="NCBIfam" id="NF009686">
    <property type="entry name" value="PRK13207.1"/>
    <property type="match status" value="1"/>
</dbReference>
<dbReference type="NCBIfam" id="NF009834">
    <property type="entry name" value="PRK13309.1"/>
    <property type="match status" value="1"/>
</dbReference>
<dbReference type="NCBIfam" id="TIGR01792">
    <property type="entry name" value="urease_alph"/>
    <property type="match status" value="1"/>
</dbReference>
<dbReference type="PANTHER" id="PTHR43440">
    <property type="entry name" value="UREASE"/>
    <property type="match status" value="1"/>
</dbReference>
<dbReference type="PANTHER" id="PTHR43440:SF1">
    <property type="entry name" value="UREASE"/>
    <property type="match status" value="1"/>
</dbReference>
<dbReference type="Pfam" id="PF01979">
    <property type="entry name" value="Amidohydro_1"/>
    <property type="match status" value="1"/>
</dbReference>
<dbReference type="Pfam" id="PF00449">
    <property type="entry name" value="Urease_alpha"/>
    <property type="match status" value="1"/>
</dbReference>
<dbReference type="PRINTS" id="PR01752">
    <property type="entry name" value="UREASE"/>
</dbReference>
<dbReference type="SUPFAM" id="SSF51338">
    <property type="entry name" value="Composite domain of metallo-dependent hydrolases"/>
    <property type="match status" value="1"/>
</dbReference>
<dbReference type="SUPFAM" id="SSF51556">
    <property type="entry name" value="Metallo-dependent hydrolases"/>
    <property type="match status" value="1"/>
</dbReference>
<dbReference type="PROSITE" id="PS01120">
    <property type="entry name" value="UREASE_1"/>
    <property type="match status" value="1"/>
</dbReference>
<dbReference type="PROSITE" id="PS00145">
    <property type="entry name" value="UREASE_2"/>
    <property type="match status" value="1"/>
</dbReference>
<dbReference type="PROSITE" id="PS51368">
    <property type="entry name" value="UREASE_3"/>
    <property type="match status" value="1"/>
</dbReference>
<sequence>MPQISRQEYAGLFGPTTGDKIRLGDTNLFIEIEKDLRGYGEESVYGGGKSLRDGMGANNNLTRDNGVLDLVITNVTIVDARLGVIKADVGIRDGKIAGIGKSGNPGVMDGVTQGMVVGVSTDAISGEHLILTAAGIDSHIHLISPQQAYHALSNGVATFFGGGIGPTDGTNGTTVTPGPWNIRQMLRSIEGLPVNVGILGKGNSYGRGPLLEQAIAGVVGYKVHEDWGATANALRHALRMADEVDIQVSVHTDSLNECGYVEDTIDAFEGRTIHTFHTEGAGGGHAPDIIRVASQTNVLPSSTNPTLPYGVNSQAELFDMIMVCHNLNPNVPADVSFAESRVRPETIAAENVLHDMGVISMFSSDSQAMGRVGENWLRILQTADAMKAARGKLPEDAAGNDNFRVLRYVAKITINPAITQGVSHVIGSVEVGKMADLVLWDPRFFGAKPKMVIKGGMINWAAMGDPNASLPTPQPVFYRPMFGAMGKTLQDTCVTFVSQAALDDGVKEKAGLDRQVIAVKNCRTISKRDLVRNDQTPNIEVDPETFAVKVDGVHATCEPIATASMNQRYFFG</sequence>
<keyword id="KW-0963">Cytoplasm</keyword>
<keyword id="KW-0378">Hydrolase</keyword>
<keyword id="KW-0479">Metal-binding</keyword>
<keyword id="KW-0533">Nickel</keyword>
<gene>
    <name evidence="1" type="primary">ureC</name>
    <name type="ordered locus">YPN_1151</name>
    <name type="ORF">YP516_1261</name>
</gene>
<feature type="chain" id="PRO_1000070707" description="Urease subunit alpha">
    <location>
        <begin position="1"/>
        <end position="572"/>
    </location>
</feature>
<feature type="domain" description="Urease" evidence="1">
    <location>
        <begin position="134"/>
        <end position="572"/>
    </location>
</feature>
<feature type="active site" description="Proton donor" evidence="1">
    <location>
        <position position="325"/>
    </location>
</feature>
<feature type="binding site" evidence="1">
    <location>
        <position position="139"/>
    </location>
    <ligand>
        <name>Ni(2+)</name>
        <dbReference type="ChEBI" id="CHEBI:49786"/>
        <label>1</label>
    </ligand>
</feature>
<feature type="binding site" evidence="1">
    <location>
        <position position="141"/>
    </location>
    <ligand>
        <name>Ni(2+)</name>
        <dbReference type="ChEBI" id="CHEBI:49786"/>
        <label>1</label>
    </ligand>
</feature>
<feature type="binding site" description="via carbamate group" evidence="1">
    <location>
        <position position="222"/>
    </location>
    <ligand>
        <name>Ni(2+)</name>
        <dbReference type="ChEBI" id="CHEBI:49786"/>
        <label>1</label>
    </ligand>
</feature>
<feature type="binding site" description="via carbamate group" evidence="1">
    <location>
        <position position="222"/>
    </location>
    <ligand>
        <name>Ni(2+)</name>
        <dbReference type="ChEBI" id="CHEBI:49786"/>
        <label>2</label>
    </ligand>
</feature>
<feature type="binding site" evidence="1">
    <location>
        <position position="224"/>
    </location>
    <ligand>
        <name>substrate</name>
    </ligand>
</feature>
<feature type="binding site" evidence="1">
    <location>
        <position position="251"/>
    </location>
    <ligand>
        <name>Ni(2+)</name>
        <dbReference type="ChEBI" id="CHEBI:49786"/>
        <label>2</label>
    </ligand>
</feature>
<feature type="binding site" evidence="1">
    <location>
        <position position="277"/>
    </location>
    <ligand>
        <name>Ni(2+)</name>
        <dbReference type="ChEBI" id="CHEBI:49786"/>
        <label>2</label>
    </ligand>
</feature>
<feature type="binding site" evidence="1">
    <location>
        <position position="365"/>
    </location>
    <ligand>
        <name>Ni(2+)</name>
        <dbReference type="ChEBI" id="CHEBI:49786"/>
        <label>1</label>
    </ligand>
</feature>
<feature type="modified residue" description="N6-carboxylysine" evidence="1">
    <location>
        <position position="222"/>
    </location>
</feature>
<name>URE1_YERPN</name>
<organism>
    <name type="scientific">Yersinia pestis bv. Antiqua (strain Nepal516)</name>
    <dbReference type="NCBI Taxonomy" id="377628"/>
    <lineage>
        <taxon>Bacteria</taxon>
        <taxon>Pseudomonadati</taxon>
        <taxon>Pseudomonadota</taxon>
        <taxon>Gammaproteobacteria</taxon>
        <taxon>Enterobacterales</taxon>
        <taxon>Yersiniaceae</taxon>
        <taxon>Yersinia</taxon>
    </lineage>
</organism>
<proteinExistence type="inferred from homology"/>
<comment type="catalytic activity">
    <reaction evidence="1">
        <text>urea + 2 H2O + H(+) = hydrogencarbonate + 2 NH4(+)</text>
        <dbReference type="Rhea" id="RHEA:20557"/>
        <dbReference type="ChEBI" id="CHEBI:15377"/>
        <dbReference type="ChEBI" id="CHEBI:15378"/>
        <dbReference type="ChEBI" id="CHEBI:16199"/>
        <dbReference type="ChEBI" id="CHEBI:17544"/>
        <dbReference type="ChEBI" id="CHEBI:28938"/>
        <dbReference type="EC" id="3.5.1.5"/>
    </reaction>
</comment>
<comment type="cofactor">
    <cofactor evidence="1">
        <name>Ni cation</name>
        <dbReference type="ChEBI" id="CHEBI:25516"/>
    </cofactor>
    <text evidence="1">Binds 2 nickel ions per subunit.</text>
</comment>
<comment type="pathway">
    <text evidence="1">Nitrogen metabolism; urea degradation; CO(2) and NH(3) from urea (urease route): step 1/1.</text>
</comment>
<comment type="subunit">
    <text evidence="1">Heterotrimer of UreA (gamma), UreB (beta) and UreC (alpha) subunits. Three heterotrimers associate to form the active enzyme.</text>
</comment>
<comment type="subcellular location">
    <subcellularLocation>
        <location evidence="1">Cytoplasm</location>
    </subcellularLocation>
</comment>
<comment type="PTM">
    <text evidence="1">Carboxylation allows a single lysine to coordinate two nickel ions.</text>
</comment>
<comment type="similarity">
    <text evidence="1">Belongs to the metallo-dependent hydrolases superfamily. Urease alpha subunit family.</text>
</comment>
<accession>Q1CKJ9</accession>
<accession>C4GR93</accession>
<reference key="1">
    <citation type="journal article" date="2006" name="J. Bacteriol.">
        <title>Complete genome sequence of Yersinia pestis strains Antiqua and Nepal516: evidence of gene reduction in an emerging pathogen.</title>
        <authorList>
            <person name="Chain P.S.G."/>
            <person name="Hu P."/>
            <person name="Malfatti S.A."/>
            <person name="Radnedge L."/>
            <person name="Larimer F."/>
            <person name="Vergez L.M."/>
            <person name="Worsham P."/>
            <person name="Chu M.C."/>
            <person name="Andersen G.L."/>
        </authorList>
    </citation>
    <scope>NUCLEOTIDE SEQUENCE [LARGE SCALE GENOMIC DNA]</scope>
    <source>
        <strain>Nepal516</strain>
    </source>
</reference>
<reference key="2">
    <citation type="submission" date="2009-04" db="EMBL/GenBank/DDBJ databases">
        <title>Yersinia pestis Nepal516A whole genome shotgun sequencing project.</title>
        <authorList>
            <person name="Plunkett G. III"/>
            <person name="Anderson B.D."/>
            <person name="Baumler D.J."/>
            <person name="Burland V."/>
            <person name="Cabot E.L."/>
            <person name="Glasner J.D."/>
            <person name="Mau B."/>
            <person name="Neeno-Eckwall E."/>
            <person name="Perna N.T."/>
            <person name="Munk A.C."/>
            <person name="Tapia R."/>
            <person name="Green L.D."/>
            <person name="Rogers Y.C."/>
            <person name="Detter J.C."/>
            <person name="Bruce D.C."/>
            <person name="Brettin T.S."/>
        </authorList>
    </citation>
    <scope>NUCLEOTIDE SEQUENCE [LARGE SCALE GENOMIC DNA]</scope>
    <source>
        <strain>Nepal516</strain>
    </source>
</reference>